<gene>
    <name type="primary">uspC</name>
    <name type="ordered locus">Z2948</name>
    <name type="ordered locus">ECs2603</name>
</gene>
<feature type="chain" id="PRO_0000147410" description="Universal stress protein C">
    <location>
        <begin position="1"/>
        <end position="142"/>
    </location>
</feature>
<sequence>MSYSNILVAVAVTPESQQLLAKAVSIARPVKGHISLITLASDPEMYNQLAAPMLEDLRSVMQEETQSFLDKLIQDAGYPVDKTFIAYGELSEHILEVCRKYHFDLVICGNHNHSFFSRASCSAKRVIASSEVDVLLVPLTGD</sequence>
<proteinExistence type="inferred from homology"/>
<accession>Q8X560</accession>
<keyword id="KW-0963">Cytoplasm</keyword>
<keyword id="KW-1185">Reference proteome</keyword>
<comment type="function">
    <text evidence="1">Required for resistance to DNA-damaging agents.</text>
</comment>
<comment type="subcellular location">
    <subcellularLocation>
        <location evidence="1">Cytoplasm</location>
    </subcellularLocation>
</comment>
<comment type="similarity">
    <text evidence="2">Belongs to the universal stress protein A family.</text>
</comment>
<protein>
    <recommendedName>
        <fullName>Universal stress protein C</fullName>
    </recommendedName>
</protein>
<reference key="1">
    <citation type="journal article" date="2001" name="Nature">
        <title>Genome sequence of enterohaemorrhagic Escherichia coli O157:H7.</title>
        <authorList>
            <person name="Perna N.T."/>
            <person name="Plunkett G. III"/>
            <person name="Burland V."/>
            <person name="Mau B."/>
            <person name="Glasner J.D."/>
            <person name="Rose D.J."/>
            <person name="Mayhew G.F."/>
            <person name="Evans P.S."/>
            <person name="Gregor J."/>
            <person name="Kirkpatrick H.A."/>
            <person name="Posfai G."/>
            <person name="Hackett J."/>
            <person name="Klink S."/>
            <person name="Boutin A."/>
            <person name="Shao Y."/>
            <person name="Miller L."/>
            <person name="Grotbeck E.J."/>
            <person name="Davis N.W."/>
            <person name="Lim A."/>
            <person name="Dimalanta E.T."/>
            <person name="Potamousis K."/>
            <person name="Apodaca J."/>
            <person name="Anantharaman T.S."/>
            <person name="Lin J."/>
            <person name="Yen G."/>
            <person name="Schwartz D.C."/>
            <person name="Welch R.A."/>
            <person name="Blattner F.R."/>
        </authorList>
    </citation>
    <scope>NUCLEOTIDE SEQUENCE [LARGE SCALE GENOMIC DNA]</scope>
    <source>
        <strain>O157:H7 / EDL933 / ATCC 700927 / EHEC</strain>
    </source>
</reference>
<reference key="2">
    <citation type="journal article" date="2001" name="DNA Res.">
        <title>Complete genome sequence of enterohemorrhagic Escherichia coli O157:H7 and genomic comparison with a laboratory strain K-12.</title>
        <authorList>
            <person name="Hayashi T."/>
            <person name="Makino K."/>
            <person name="Ohnishi M."/>
            <person name="Kurokawa K."/>
            <person name="Ishii K."/>
            <person name="Yokoyama K."/>
            <person name="Han C.-G."/>
            <person name="Ohtsubo E."/>
            <person name="Nakayama K."/>
            <person name="Murata T."/>
            <person name="Tanaka M."/>
            <person name="Tobe T."/>
            <person name="Iida T."/>
            <person name="Takami H."/>
            <person name="Honda T."/>
            <person name="Sasakawa C."/>
            <person name="Ogasawara N."/>
            <person name="Yasunaga T."/>
            <person name="Kuhara S."/>
            <person name="Shiba T."/>
            <person name="Hattori M."/>
            <person name="Shinagawa H."/>
        </authorList>
    </citation>
    <scope>NUCLEOTIDE SEQUENCE [LARGE SCALE GENOMIC DNA]</scope>
    <source>
        <strain>O157:H7 / Sakai / RIMD 0509952 / EHEC</strain>
    </source>
</reference>
<dbReference type="EMBL" id="AE005174">
    <property type="protein sequence ID" value="AAG56884.1"/>
    <property type="molecule type" value="Genomic_DNA"/>
</dbReference>
<dbReference type="EMBL" id="BA000007">
    <property type="protein sequence ID" value="BAB36026.1"/>
    <property type="molecule type" value="Genomic_DNA"/>
</dbReference>
<dbReference type="PIR" id="C90954">
    <property type="entry name" value="C90954"/>
</dbReference>
<dbReference type="PIR" id="H85802">
    <property type="entry name" value="H85802"/>
</dbReference>
<dbReference type="RefSeq" id="NP_310630.1">
    <property type="nucleotide sequence ID" value="NC_002695.1"/>
</dbReference>
<dbReference type="RefSeq" id="WP_000122432.1">
    <property type="nucleotide sequence ID" value="NZ_VOAI01000010.1"/>
</dbReference>
<dbReference type="SMR" id="Q8X560"/>
<dbReference type="STRING" id="155864.Z2948"/>
<dbReference type="DNASU" id="961866"/>
<dbReference type="GeneID" id="915311"/>
<dbReference type="KEGG" id="ece:Z2948"/>
<dbReference type="KEGG" id="ecs:ECs_2603"/>
<dbReference type="PATRIC" id="fig|386585.9.peg.2729"/>
<dbReference type="eggNOG" id="COG0589">
    <property type="taxonomic scope" value="Bacteria"/>
</dbReference>
<dbReference type="HOGENOM" id="CLU_049301_18_1_6"/>
<dbReference type="OMA" id="CGNHNQS"/>
<dbReference type="Proteomes" id="UP000000558">
    <property type="component" value="Chromosome"/>
</dbReference>
<dbReference type="Proteomes" id="UP000002519">
    <property type="component" value="Chromosome"/>
</dbReference>
<dbReference type="GO" id="GO:0005737">
    <property type="term" value="C:cytoplasm"/>
    <property type="evidence" value="ECO:0007669"/>
    <property type="project" value="UniProtKB-SubCell"/>
</dbReference>
<dbReference type="CDD" id="cd23657">
    <property type="entry name" value="USP-A-like"/>
    <property type="match status" value="1"/>
</dbReference>
<dbReference type="FunFam" id="3.40.50.620:FF:000121">
    <property type="entry name" value="Universal stress protein"/>
    <property type="match status" value="1"/>
</dbReference>
<dbReference type="Gene3D" id="3.40.50.620">
    <property type="entry name" value="HUPs"/>
    <property type="match status" value="1"/>
</dbReference>
<dbReference type="InterPro" id="IPR014729">
    <property type="entry name" value="Rossmann-like_a/b/a_fold"/>
</dbReference>
<dbReference type="InterPro" id="IPR006015">
    <property type="entry name" value="Universal_stress_UspA"/>
</dbReference>
<dbReference type="InterPro" id="IPR006016">
    <property type="entry name" value="UspA"/>
</dbReference>
<dbReference type="NCBIfam" id="NF007512">
    <property type="entry name" value="PRK10116.1"/>
    <property type="match status" value="1"/>
</dbReference>
<dbReference type="PANTHER" id="PTHR46268">
    <property type="entry name" value="STRESS RESPONSE PROTEIN NHAX"/>
    <property type="match status" value="1"/>
</dbReference>
<dbReference type="PANTHER" id="PTHR46268:SF16">
    <property type="entry name" value="UNIVERSAL STRESS PROTEIN C"/>
    <property type="match status" value="1"/>
</dbReference>
<dbReference type="Pfam" id="PF00582">
    <property type="entry name" value="Usp"/>
    <property type="match status" value="1"/>
</dbReference>
<dbReference type="PIRSF" id="PIRSF006276">
    <property type="entry name" value="UspA"/>
    <property type="match status" value="1"/>
</dbReference>
<dbReference type="SUPFAM" id="SSF52402">
    <property type="entry name" value="Adenine nucleotide alpha hydrolases-like"/>
    <property type="match status" value="1"/>
</dbReference>
<evidence type="ECO:0000250" key="1"/>
<evidence type="ECO:0000305" key="2"/>
<organism>
    <name type="scientific">Escherichia coli O157:H7</name>
    <dbReference type="NCBI Taxonomy" id="83334"/>
    <lineage>
        <taxon>Bacteria</taxon>
        <taxon>Pseudomonadati</taxon>
        <taxon>Pseudomonadota</taxon>
        <taxon>Gammaproteobacteria</taxon>
        <taxon>Enterobacterales</taxon>
        <taxon>Enterobacteriaceae</taxon>
        <taxon>Escherichia</taxon>
    </lineage>
</organism>
<name>USPC_ECO57</name>